<evidence type="ECO:0000255" key="1">
    <source>
        <dbReference type="HAMAP-Rule" id="MF_04049"/>
    </source>
</evidence>
<evidence type="ECO:0000305" key="2"/>
<name>CAP8_ADE40</name>
<organismHost>
    <name type="scientific">Homo sapiens</name>
    <name type="common">Human</name>
    <dbReference type="NCBI Taxonomy" id="9606"/>
</organismHost>
<protein>
    <recommendedName>
        <fullName evidence="1">Pre-hexon-linking protein VIII</fullName>
    </recommendedName>
    <alternativeName>
        <fullName evidence="1">Pre-protein VIII</fullName>
        <shortName evidence="1">pVIII</shortName>
    </alternativeName>
    <component>
        <recommendedName>
            <fullName evidence="1">Hexon-linking protein-N</fullName>
        </recommendedName>
        <alternativeName>
            <fullName evidence="1">12.1 kDa protein VIII</fullName>
        </alternativeName>
        <alternativeName>
            <fullName evidence="1">Protein VIII-N</fullName>
        </alternativeName>
    </component>
    <component>
        <recommendedName>
            <fullName evidence="1">Hexon-linking protein-C</fullName>
        </recommendedName>
        <alternativeName>
            <fullName evidence="1">7.6 kDa protein VIII</fullName>
        </alternativeName>
        <alternativeName>
            <fullName evidence="1">Protein VIII-C</fullName>
        </alternativeName>
    </component>
</protein>
<feature type="chain" id="PRO_0000421399" description="Pre-hexon-linking protein VIII" evidence="1">
    <location>
        <begin position="1"/>
        <end position="233"/>
    </location>
</feature>
<feature type="peptide" id="PRO_0000421400" description="Hexon-linking protein-N" evidence="1">
    <location>
        <begin position="1"/>
        <end position="111"/>
    </location>
</feature>
<feature type="propeptide" id="PRO_0000036499" evidence="1">
    <location>
        <begin position="112"/>
        <end position="163"/>
    </location>
</feature>
<feature type="peptide" id="PRO_0000036500" description="Hexon-linking protein-C" evidence="1">
    <location>
        <begin position="164"/>
        <end position="233"/>
    </location>
</feature>
<feature type="site" description="Cleavage; by viral protease" evidence="1">
    <location>
        <begin position="111"/>
        <end position="112"/>
    </location>
</feature>
<feature type="site" description="Cleavage; by viral protease" evidence="1">
    <location>
        <begin position="163"/>
        <end position="164"/>
    </location>
</feature>
<feature type="modified residue" description="Phosphothreonine; by host" evidence="1">
    <location>
        <position position="64"/>
    </location>
</feature>
<feature type="modified residue" description="Phosphoserine; by host" evidence="1">
    <location>
        <position position="180"/>
    </location>
</feature>
<accession>P11821</accession>
<comment type="function">
    <molecule>Hexon-linking protein-N</molecule>
    <text evidence="1">Structural component of the virion that acts as a cement protein on the capsid interior and which glue the peripentonal hexons and group-of-nine hexons together.</text>
</comment>
<comment type="function">
    <molecule>Hexon-linking protein-C</molecule>
    <text evidence="1">Structural component of the virion that acts as a cement protein on the capsid interior and which glue the peripentonal hexons and group-of-nine hexons together.</text>
</comment>
<comment type="subunit">
    <text evidence="1">Interacts with the peripentonal hexons as well as the hexons in the facets. Part of a complex composed of the core-capsid bridging protein, the endosome lysis protein VI and the hexon-linking protein VIII; these interactions bridge the virus core to the capsid.</text>
</comment>
<comment type="subcellular location">
    <molecule>Hexon-linking protein-C</molecule>
    <subcellularLocation>
        <location evidence="1">Virion</location>
    </subcellularLocation>
    <text evidence="1">Located on the inner side of the capsid shell. Present in 120 copies per virion.</text>
</comment>
<comment type="subcellular location">
    <molecule>Pre-hexon-linking protein VIII</molecule>
    <subcellularLocation>
        <location evidence="1">Host nucleus</location>
    </subcellularLocation>
</comment>
<comment type="subcellular location">
    <molecule>Hexon-linking protein-N</molecule>
    <subcellularLocation>
        <location evidence="1">Virion</location>
    </subcellularLocation>
    <text evidence="1">Located on the inner side of the capsid shell. Present in 120 copies per virion.</text>
</comment>
<comment type="induction">
    <text evidence="1">Expressed in the late phase of the viral replicative cycle.</text>
</comment>
<comment type="PTM">
    <text evidence="1">Cleaved by the viral protease during virion maturation. May cause the middle segment to be shed from the capsid.</text>
</comment>
<comment type="miscellaneous">
    <text evidence="1">All late proteins expressed from the major late promoter are produced by alternative splicing and alternative polyadenylation of the same gene giving rise to non-overlapping ORFs. A leader sequence is present in the N-terminus of all these mRNAs and is recognized by the viral shutoff protein to provide expression although conventional translation via ribosome scanning from the cap has been shut off in the host cell.</text>
</comment>
<comment type="similarity">
    <text evidence="1 2">Belongs to the adenoviridae hexon-linking protein family.</text>
</comment>
<keyword id="KW-0167">Capsid protein</keyword>
<keyword id="KW-1048">Host nucleus</keyword>
<keyword id="KW-0426">Late protein</keyword>
<keyword id="KW-0597">Phosphoprotein</keyword>
<keyword id="KW-1185">Reference proteome</keyword>
<keyword id="KW-0946">Virion</keyword>
<gene>
    <name evidence="1" type="primary">L4</name>
</gene>
<reference key="1">
    <citation type="journal article" date="1993" name="J. Mol. Biol.">
        <title>The DNA sequence of adenovirus type 40.</title>
        <authorList>
            <person name="Davison A.J."/>
            <person name="Telford E.A."/>
            <person name="Watson M.S."/>
            <person name="McBride K."/>
            <person name="Mautner V."/>
        </authorList>
    </citation>
    <scope>NUCLEOTIDE SEQUENCE [LARGE SCALE GENOMIC DNA]</scope>
    <source>
        <strain>Dugan</strain>
    </source>
</reference>
<reference key="2">
    <citation type="journal article" date="1988" name="Virology">
        <title>The genes encoding the DNA binding protein and the 23K protease of adenovirus types 40 and 41.</title>
        <authorList>
            <person name="Vos H.L."/>
            <person name="der Lee F.M."/>
            <person name="Reemst A.M.C.B."/>
            <person name="van Loon A.E."/>
            <person name="Sussenbach J.S."/>
        </authorList>
    </citation>
    <scope>NUCLEOTIDE SEQUENCE [GENOMIC DNA] OF 1-47</scope>
</reference>
<organism>
    <name type="scientific">Human adenovirus F serotype 40</name>
    <name type="common">HAdV-40</name>
    <name type="synonym">Human adenovirus 40</name>
    <dbReference type="NCBI Taxonomy" id="28284"/>
    <lineage>
        <taxon>Viruses</taxon>
        <taxon>Varidnaviria</taxon>
        <taxon>Bamfordvirae</taxon>
        <taxon>Preplasmiviricota</taxon>
        <taxon>Tectiliviricetes</taxon>
        <taxon>Rowavirales</taxon>
        <taxon>Adenoviridae</taxon>
        <taxon>Mastadenovirus</taxon>
        <taxon>Human mastadenovirus F</taxon>
    </lineage>
</organism>
<proteinExistence type="inferred from homology"/>
<sequence>MSKDIPTPYMWSYQPQMGLAAGASQDYSSRMNWLSAGPHMIGRVNGIRATRNQILLEQAALTSTPRRQLNPPSWPAAQVYQENPAPTTVLLPRDAEAEVQMTNSGAQLAGGARHVRFRDRPSPYSSGSIKRLIIRGRGIQLNDEVVSSSTGPRPDGVFQLGGAGRSSFTPRQAYLTLQSSSSQPRSGGIGTLQFVEEFVPSVYFNPFSGAPGLYPDDFIPNYDAVSESVDGYD</sequence>
<dbReference type="EMBL" id="L19443">
    <property type="protein sequence ID" value="AAC13972.1"/>
    <property type="molecule type" value="Genomic_DNA"/>
</dbReference>
<dbReference type="EMBL" id="M19316">
    <property type="protein sequence ID" value="AAA52198.1"/>
    <property type="molecule type" value="Genomic_DNA"/>
</dbReference>
<dbReference type="SMR" id="P11821"/>
<dbReference type="DNASU" id="2715920"/>
<dbReference type="Proteomes" id="UP000151954">
    <property type="component" value="Segment"/>
</dbReference>
<dbReference type="GO" id="GO:0042025">
    <property type="term" value="C:host cell nucleus"/>
    <property type="evidence" value="ECO:0007669"/>
    <property type="project" value="UniProtKB-SubCell"/>
</dbReference>
<dbReference type="GO" id="GO:0019028">
    <property type="term" value="C:viral capsid"/>
    <property type="evidence" value="ECO:0007669"/>
    <property type="project" value="UniProtKB-UniRule"/>
</dbReference>
<dbReference type="GO" id="GO:0031423">
    <property type="term" value="F:hexon binding"/>
    <property type="evidence" value="ECO:0007669"/>
    <property type="project" value="InterPro"/>
</dbReference>
<dbReference type="Gene3D" id="6.10.250.1460">
    <property type="match status" value="1"/>
</dbReference>
<dbReference type="HAMAP" id="MF_04049">
    <property type="entry name" value="ADV_CAP8"/>
    <property type="match status" value="1"/>
</dbReference>
<dbReference type="InterPro" id="IPR000646">
    <property type="entry name" value="Adeno_PVIII"/>
</dbReference>
<dbReference type="Pfam" id="PF01310">
    <property type="entry name" value="Adeno_PVIII"/>
    <property type="match status" value="1"/>
</dbReference>